<proteinExistence type="inferred from homology"/>
<accession>B8ZSC3</accession>
<dbReference type="EMBL" id="FM211192">
    <property type="protein sequence ID" value="CAR71975.1"/>
    <property type="molecule type" value="Genomic_DNA"/>
</dbReference>
<dbReference type="SMR" id="B8ZSC3"/>
<dbReference type="KEGG" id="mlb:MLBr01879"/>
<dbReference type="HOGENOM" id="CLU_072226_1_1_11"/>
<dbReference type="Proteomes" id="UP000006900">
    <property type="component" value="Chromosome"/>
</dbReference>
<dbReference type="GO" id="GO:0015935">
    <property type="term" value="C:small ribosomal subunit"/>
    <property type="evidence" value="ECO:0007669"/>
    <property type="project" value="InterPro"/>
</dbReference>
<dbReference type="GO" id="GO:0019843">
    <property type="term" value="F:rRNA binding"/>
    <property type="evidence" value="ECO:0007669"/>
    <property type="project" value="UniProtKB-UniRule"/>
</dbReference>
<dbReference type="GO" id="GO:0003735">
    <property type="term" value="F:structural constituent of ribosome"/>
    <property type="evidence" value="ECO:0007669"/>
    <property type="project" value="InterPro"/>
</dbReference>
<dbReference type="GO" id="GO:0000049">
    <property type="term" value="F:tRNA binding"/>
    <property type="evidence" value="ECO:0007669"/>
    <property type="project" value="UniProtKB-UniRule"/>
</dbReference>
<dbReference type="GO" id="GO:0006412">
    <property type="term" value="P:translation"/>
    <property type="evidence" value="ECO:0007669"/>
    <property type="project" value="UniProtKB-UniRule"/>
</dbReference>
<dbReference type="CDD" id="cd14869">
    <property type="entry name" value="uS7_Bacteria"/>
    <property type="match status" value="1"/>
</dbReference>
<dbReference type="FunFam" id="1.10.455.10:FF:000001">
    <property type="entry name" value="30S ribosomal protein S7"/>
    <property type="match status" value="1"/>
</dbReference>
<dbReference type="Gene3D" id="1.10.455.10">
    <property type="entry name" value="Ribosomal protein S7 domain"/>
    <property type="match status" value="1"/>
</dbReference>
<dbReference type="HAMAP" id="MF_00480_B">
    <property type="entry name" value="Ribosomal_uS7_B"/>
    <property type="match status" value="1"/>
</dbReference>
<dbReference type="InterPro" id="IPR000235">
    <property type="entry name" value="Ribosomal_uS7"/>
</dbReference>
<dbReference type="InterPro" id="IPR005717">
    <property type="entry name" value="Ribosomal_uS7_bac/org-type"/>
</dbReference>
<dbReference type="InterPro" id="IPR020606">
    <property type="entry name" value="Ribosomal_uS7_CS"/>
</dbReference>
<dbReference type="InterPro" id="IPR023798">
    <property type="entry name" value="Ribosomal_uS7_dom"/>
</dbReference>
<dbReference type="InterPro" id="IPR036823">
    <property type="entry name" value="Ribosomal_uS7_dom_sf"/>
</dbReference>
<dbReference type="NCBIfam" id="TIGR01029">
    <property type="entry name" value="rpsG_bact"/>
    <property type="match status" value="1"/>
</dbReference>
<dbReference type="PANTHER" id="PTHR11205">
    <property type="entry name" value="RIBOSOMAL PROTEIN S7"/>
    <property type="match status" value="1"/>
</dbReference>
<dbReference type="Pfam" id="PF00177">
    <property type="entry name" value="Ribosomal_S7"/>
    <property type="match status" value="1"/>
</dbReference>
<dbReference type="PIRSF" id="PIRSF002122">
    <property type="entry name" value="RPS7p_RPS7a_RPS5e_RPS7o"/>
    <property type="match status" value="1"/>
</dbReference>
<dbReference type="SUPFAM" id="SSF47973">
    <property type="entry name" value="Ribosomal protein S7"/>
    <property type="match status" value="1"/>
</dbReference>
<dbReference type="PROSITE" id="PS00052">
    <property type="entry name" value="RIBOSOMAL_S7"/>
    <property type="match status" value="1"/>
</dbReference>
<reference key="1">
    <citation type="journal article" date="2009" name="Nat. Genet.">
        <title>Comparative genomic and phylogeographic analysis of Mycobacterium leprae.</title>
        <authorList>
            <person name="Monot M."/>
            <person name="Honore N."/>
            <person name="Garnier T."/>
            <person name="Zidane N."/>
            <person name="Sherafi D."/>
            <person name="Paniz-Mondolfi A."/>
            <person name="Matsuoka M."/>
            <person name="Taylor G.M."/>
            <person name="Donoghue H.D."/>
            <person name="Bouwman A."/>
            <person name="Mays S."/>
            <person name="Watson C."/>
            <person name="Lockwood D."/>
            <person name="Khamispour A."/>
            <person name="Dowlati Y."/>
            <person name="Jianping S."/>
            <person name="Rea T.H."/>
            <person name="Vera-Cabrera L."/>
            <person name="Stefani M.M."/>
            <person name="Banu S."/>
            <person name="Macdonald M."/>
            <person name="Sapkota B.R."/>
            <person name="Spencer J.S."/>
            <person name="Thomas J."/>
            <person name="Harshman K."/>
            <person name="Singh P."/>
            <person name="Busso P."/>
            <person name="Gattiker A."/>
            <person name="Rougemont J."/>
            <person name="Brennan P.J."/>
            <person name="Cole S.T."/>
        </authorList>
    </citation>
    <scope>NUCLEOTIDE SEQUENCE [LARGE SCALE GENOMIC DNA]</scope>
    <source>
        <strain>Br4923</strain>
    </source>
</reference>
<feature type="chain" id="PRO_1000135614" description="Small ribosomal subunit protein uS7">
    <location>
        <begin position="1"/>
        <end position="156"/>
    </location>
</feature>
<organism>
    <name type="scientific">Mycobacterium leprae (strain Br4923)</name>
    <dbReference type="NCBI Taxonomy" id="561304"/>
    <lineage>
        <taxon>Bacteria</taxon>
        <taxon>Bacillati</taxon>
        <taxon>Actinomycetota</taxon>
        <taxon>Actinomycetes</taxon>
        <taxon>Mycobacteriales</taxon>
        <taxon>Mycobacteriaceae</taxon>
        <taxon>Mycobacterium</taxon>
    </lineage>
</organism>
<gene>
    <name evidence="1" type="primary">rpsG</name>
    <name type="ordered locus">MLBr01879</name>
</gene>
<name>RS7_MYCLB</name>
<comment type="function">
    <text evidence="1">One of the primary rRNA binding proteins, it binds directly to 16S rRNA where it nucleates assembly of the head domain of the 30S subunit. Is located at the subunit interface close to the decoding center, probably blocks exit of the E-site tRNA.</text>
</comment>
<comment type="subunit">
    <text evidence="1">Part of the 30S ribosomal subunit. Contacts proteins S9 and S11.</text>
</comment>
<comment type="similarity">
    <text evidence="1">Belongs to the universal ribosomal protein uS7 family.</text>
</comment>
<protein>
    <recommendedName>
        <fullName evidence="1">Small ribosomal subunit protein uS7</fullName>
    </recommendedName>
    <alternativeName>
        <fullName evidence="2">30S ribosomal protein S7</fullName>
    </alternativeName>
</protein>
<evidence type="ECO:0000255" key="1">
    <source>
        <dbReference type="HAMAP-Rule" id="MF_00480"/>
    </source>
</evidence>
<evidence type="ECO:0000305" key="2"/>
<keyword id="KW-0687">Ribonucleoprotein</keyword>
<keyword id="KW-0689">Ribosomal protein</keyword>
<keyword id="KW-0694">RNA-binding</keyword>
<keyword id="KW-0699">rRNA-binding</keyword>
<keyword id="KW-0820">tRNA-binding</keyword>
<sequence length="156" mass="17607">MPRKGPAPKRPLVNDPVYGSQLVTQLVNKILLKGKKSLAERIVYGALEHARDKTGTDPVITLKRALDNVKPALEVRSRRVGGATYQVPVEVRPDRSTTLALRWLVGFSRQRREKTMIERLANEILDASNGLGASVKRREDTHKMAEANRAFAHYRW</sequence>